<proteinExistence type="evidence at transcript level"/>
<dbReference type="EC" id="3.6.1.15" evidence="3"/>
<dbReference type="EMBL" id="CR926412">
    <property type="protein sequence ID" value="CAJ81622.1"/>
    <property type="molecule type" value="mRNA"/>
</dbReference>
<dbReference type="EMBL" id="DQ118412">
    <property type="protein sequence ID" value="ABA00734.1"/>
    <property type="molecule type" value="mRNA"/>
</dbReference>
<dbReference type="RefSeq" id="NP_001015918.1">
    <property type="nucleotide sequence ID" value="NM_001015918.2"/>
</dbReference>
<dbReference type="RefSeq" id="XP_012822005.2">
    <property type="nucleotide sequence ID" value="XM_012966551.3"/>
</dbReference>
<dbReference type="SMR" id="Q28CF8"/>
<dbReference type="FunCoup" id="Q28CF8">
    <property type="interactions" value="572"/>
</dbReference>
<dbReference type="STRING" id="8364.ENSXETP00000005967"/>
<dbReference type="GlyCosmos" id="Q28CF8">
    <property type="glycosylation" value="2 sites, No reported glycans"/>
</dbReference>
<dbReference type="PaxDb" id="8364-ENSXETP00000008111"/>
<dbReference type="GeneID" id="548672"/>
<dbReference type="KEGG" id="xtr:548672"/>
<dbReference type="AGR" id="Xenbase:XB-GENE-973424"/>
<dbReference type="CTD" id="57089"/>
<dbReference type="Xenbase" id="XB-GENE-973424">
    <property type="gene designation" value="entpd7"/>
</dbReference>
<dbReference type="eggNOG" id="KOG1386">
    <property type="taxonomic scope" value="Eukaryota"/>
</dbReference>
<dbReference type="InParanoid" id="Q28CF8"/>
<dbReference type="OMA" id="HESIGFM"/>
<dbReference type="OrthoDB" id="6372431at2759"/>
<dbReference type="Reactome" id="R-XTR-8850843">
    <property type="pathway name" value="Phosphate bond hydrolysis by NTPDase proteins"/>
</dbReference>
<dbReference type="Proteomes" id="UP000008143">
    <property type="component" value="Chromosome 7"/>
</dbReference>
<dbReference type="Bgee" id="ENSXETG00000003746">
    <property type="expression patterns" value="Expressed in embryo and 14 other cell types or tissues"/>
</dbReference>
<dbReference type="GO" id="GO:0030659">
    <property type="term" value="C:cytoplasmic vesicle membrane"/>
    <property type="evidence" value="ECO:0000250"/>
    <property type="project" value="UniProtKB"/>
</dbReference>
<dbReference type="GO" id="GO:0043273">
    <property type="term" value="F:CTPase activity"/>
    <property type="evidence" value="ECO:0000250"/>
    <property type="project" value="UniProtKB"/>
</dbReference>
<dbReference type="GO" id="GO:0003924">
    <property type="term" value="F:GTPase activity"/>
    <property type="evidence" value="ECO:0000250"/>
    <property type="project" value="UniProtKB"/>
</dbReference>
<dbReference type="GO" id="GO:0046872">
    <property type="term" value="F:metal ion binding"/>
    <property type="evidence" value="ECO:0007669"/>
    <property type="project" value="UniProtKB-KW"/>
</dbReference>
<dbReference type="GO" id="GO:0017111">
    <property type="term" value="F:ribonucleoside triphosphate phosphatase activity"/>
    <property type="evidence" value="ECO:0000250"/>
    <property type="project" value="UniProtKB"/>
</dbReference>
<dbReference type="GO" id="GO:0006254">
    <property type="term" value="P:CTP catabolic process"/>
    <property type="evidence" value="ECO:0000250"/>
    <property type="project" value="UniProtKB"/>
</dbReference>
<dbReference type="GO" id="GO:0046039">
    <property type="term" value="P:GTP metabolic process"/>
    <property type="evidence" value="ECO:0000250"/>
    <property type="project" value="UniProtKB"/>
</dbReference>
<dbReference type="GO" id="GO:0034656">
    <property type="term" value="P:nucleobase-containing small molecule catabolic process"/>
    <property type="evidence" value="ECO:0000250"/>
    <property type="project" value="UniProtKB"/>
</dbReference>
<dbReference type="GO" id="GO:0046052">
    <property type="term" value="P:UTP catabolic process"/>
    <property type="evidence" value="ECO:0000250"/>
    <property type="project" value="UniProtKB"/>
</dbReference>
<dbReference type="CDD" id="cd24045">
    <property type="entry name" value="ASKHA_NBD_NTPDase4-like"/>
    <property type="match status" value="1"/>
</dbReference>
<dbReference type="FunFam" id="3.30.420.40:FF:000057">
    <property type="entry name" value="Ectonucleoside triphosphate diphosphohydrolase 4"/>
    <property type="match status" value="1"/>
</dbReference>
<dbReference type="FunFam" id="3.30.420.150:FF:000003">
    <property type="entry name" value="ectonucleoside triphosphate diphosphohydrolase 7"/>
    <property type="match status" value="1"/>
</dbReference>
<dbReference type="Gene3D" id="3.30.420.40">
    <property type="match status" value="1"/>
</dbReference>
<dbReference type="Gene3D" id="3.30.420.150">
    <property type="entry name" value="Exopolyphosphatase. Domain 2"/>
    <property type="match status" value="1"/>
</dbReference>
<dbReference type="InterPro" id="IPR000407">
    <property type="entry name" value="GDA1_CD39_NTPase"/>
</dbReference>
<dbReference type="PANTHER" id="PTHR11782">
    <property type="entry name" value="ADENOSINE/GUANOSINE DIPHOSPHATASE"/>
    <property type="match status" value="1"/>
</dbReference>
<dbReference type="PANTHER" id="PTHR11782:SF37">
    <property type="entry name" value="ECTONUCLEOSIDE TRIPHOSPHATE DIPHOSPHOHYDROLASE 7"/>
    <property type="match status" value="1"/>
</dbReference>
<dbReference type="Pfam" id="PF01150">
    <property type="entry name" value="GDA1_CD39"/>
    <property type="match status" value="1"/>
</dbReference>
<evidence type="ECO:0000250" key="1"/>
<evidence type="ECO:0000250" key="2">
    <source>
        <dbReference type="UniProtKB" id="O35795"/>
    </source>
</evidence>
<evidence type="ECO:0000250" key="3">
    <source>
        <dbReference type="UniProtKB" id="Q9NQZ7"/>
    </source>
</evidence>
<evidence type="ECO:0000255" key="4"/>
<evidence type="ECO:0000305" key="5"/>
<comment type="function">
    <text evidence="3">Catalyzes the hydrolysis of nucleoside triphosphates and diphosphates in a calcium- or magnesium-dependent manner. Preferentially hydrolyzes nucleoside 5'-triphosphates, with substrate preference for UTP &gt; GTP &gt; CTP. Hydrolyzes ATP and nucleoside diphosphates only to a minor extent.</text>
</comment>
<comment type="catalytic activity">
    <reaction evidence="3">
        <text>a ribonucleoside 5'-triphosphate + H2O = a ribonucleoside 5'-diphosphate + phosphate + H(+)</text>
        <dbReference type="Rhea" id="RHEA:23680"/>
        <dbReference type="ChEBI" id="CHEBI:15377"/>
        <dbReference type="ChEBI" id="CHEBI:15378"/>
        <dbReference type="ChEBI" id="CHEBI:43474"/>
        <dbReference type="ChEBI" id="CHEBI:57930"/>
        <dbReference type="ChEBI" id="CHEBI:61557"/>
        <dbReference type="EC" id="3.6.1.15"/>
    </reaction>
</comment>
<comment type="catalytic activity">
    <reaction evidence="3">
        <text>UTP + H2O = UDP + phosphate + H(+)</text>
        <dbReference type="Rhea" id="RHEA:64900"/>
        <dbReference type="ChEBI" id="CHEBI:15377"/>
        <dbReference type="ChEBI" id="CHEBI:15378"/>
        <dbReference type="ChEBI" id="CHEBI:43474"/>
        <dbReference type="ChEBI" id="CHEBI:46398"/>
        <dbReference type="ChEBI" id="CHEBI:58223"/>
    </reaction>
</comment>
<comment type="catalytic activity">
    <reaction evidence="3">
        <text>GTP + H2O = GDP + phosphate + H(+)</text>
        <dbReference type="Rhea" id="RHEA:19669"/>
        <dbReference type="ChEBI" id="CHEBI:15377"/>
        <dbReference type="ChEBI" id="CHEBI:15378"/>
        <dbReference type="ChEBI" id="CHEBI:37565"/>
        <dbReference type="ChEBI" id="CHEBI:43474"/>
        <dbReference type="ChEBI" id="CHEBI:58189"/>
    </reaction>
</comment>
<comment type="catalytic activity">
    <reaction evidence="3">
        <text>CTP + H2O = CDP + phosphate + H(+)</text>
        <dbReference type="Rhea" id="RHEA:29387"/>
        <dbReference type="ChEBI" id="CHEBI:15377"/>
        <dbReference type="ChEBI" id="CHEBI:15378"/>
        <dbReference type="ChEBI" id="CHEBI:37563"/>
        <dbReference type="ChEBI" id="CHEBI:43474"/>
        <dbReference type="ChEBI" id="CHEBI:58069"/>
    </reaction>
</comment>
<comment type="cofactor">
    <cofactor evidence="3">
        <name>Ca(2+)</name>
        <dbReference type="ChEBI" id="CHEBI:29108"/>
    </cofactor>
    <cofactor evidence="3">
        <name>Mg(2+)</name>
        <dbReference type="ChEBI" id="CHEBI:18420"/>
    </cofactor>
</comment>
<comment type="subcellular location">
    <subcellularLocation>
        <location evidence="3">Cytoplasmic vesicle membrane</location>
        <topology evidence="4">Multi-pass membrane protein</topology>
    </subcellularLocation>
</comment>
<comment type="similarity">
    <text evidence="5">Belongs to the GDA1/CD39 NTPase family.</text>
</comment>
<keyword id="KW-0106">Calcium</keyword>
<keyword id="KW-0968">Cytoplasmic vesicle</keyword>
<keyword id="KW-1015">Disulfide bond</keyword>
<keyword id="KW-0325">Glycoprotein</keyword>
<keyword id="KW-0378">Hydrolase</keyword>
<keyword id="KW-0460">Magnesium</keyword>
<keyword id="KW-0472">Membrane</keyword>
<keyword id="KW-0479">Metal-binding</keyword>
<keyword id="KW-1185">Reference proteome</keyword>
<keyword id="KW-0812">Transmembrane</keyword>
<keyword id="KW-1133">Transmembrane helix</keyword>
<organism>
    <name type="scientific">Xenopus tropicalis</name>
    <name type="common">Western clawed frog</name>
    <name type="synonym">Silurana tropicalis</name>
    <dbReference type="NCBI Taxonomy" id="8364"/>
    <lineage>
        <taxon>Eukaryota</taxon>
        <taxon>Metazoa</taxon>
        <taxon>Chordata</taxon>
        <taxon>Craniata</taxon>
        <taxon>Vertebrata</taxon>
        <taxon>Euteleostomi</taxon>
        <taxon>Amphibia</taxon>
        <taxon>Batrachia</taxon>
        <taxon>Anura</taxon>
        <taxon>Pipoidea</taxon>
        <taxon>Pipidae</taxon>
        <taxon>Xenopodinae</taxon>
        <taxon>Xenopus</taxon>
        <taxon>Silurana</taxon>
    </lineage>
</organism>
<feature type="chain" id="PRO_0000274422" description="Ectonucleoside triphosphate diphosphohydrolase 7">
    <location>
        <begin position="1"/>
        <end position="610"/>
    </location>
</feature>
<feature type="topological domain" description="Cytoplasmic" evidence="4">
    <location>
        <begin position="1"/>
        <end position="28"/>
    </location>
</feature>
<feature type="transmembrane region" description="Helical" evidence="4">
    <location>
        <begin position="29"/>
        <end position="49"/>
    </location>
</feature>
<feature type="topological domain" description="Vesicular" evidence="4">
    <location>
        <begin position="50"/>
        <end position="555"/>
    </location>
</feature>
<feature type="transmembrane region" description="Helical" evidence="4">
    <location>
        <begin position="556"/>
        <end position="576"/>
    </location>
</feature>
<feature type="topological domain" description="Cytoplasmic" evidence="4">
    <location>
        <begin position="577"/>
        <end position="610"/>
    </location>
</feature>
<feature type="active site" description="Proton acceptor" evidence="2">
    <location>
        <position position="217"/>
    </location>
</feature>
<feature type="glycosylation site" description="N-linked (GlcNAc...) asparagine" evidence="4">
    <location>
        <position position="336"/>
    </location>
</feature>
<feature type="glycosylation site" description="N-linked (GlcNAc...) asparagine" evidence="4">
    <location>
        <position position="400"/>
    </location>
</feature>
<feature type="disulfide bond" evidence="1">
    <location>
        <begin position="454"/>
        <end position="483"/>
    </location>
</feature>
<feature type="sequence conflict" description="In Ref. 2; ABA00734." evidence="5" ref="2">
    <original>I</original>
    <variation>T</variation>
    <location>
        <position position="367"/>
    </location>
</feature>
<reference key="1">
    <citation type="submission" date="2006-10" db="EMBL/GenBank/DDBJ databases">
        <authorList>
            <consortium name="Sanger Xenopus tropicalis EST/cDNA project"/>
        </authorList>
    </citation>
    <scope>NUCLEOTIDE SEQUENCE [LARGE SCALE MRNA]</scope>
    <source>
        <tissue>Gastrula</tissue>
    </source>
</reference>
<reference key="2">
    <citation type="journal article" date="2006" name="Genomics">
        <title>Comparative genomic and expression analysis of the conserved NTPDase gene family in Xenopus.</title>
        <authorList>
            <person name="Masse K."/>
            <person name="Eason R."/>
            <person name="Bhamra S."/>
            <person name="Dale N."/>
            <person name="Jones E."/>
        </authorList>
    </citation>
    <scope>NUCLEOTIDE SEQUENCE [MRNA] OF 3-595</scope>
</reference>
<protein>
    <recommendedName>
        <fullName>Ectonucleoside triphosphate diphosphohydrolase 7</fullName>
        <shortName>NTPDase 7</shortName>
        <ecNumber evidence="3">3.6.1.15</ecNumber>
    </recommendedName>
</protein>
<sequence length="610" mass="69915">MARISFSCLFPASWHCSLPSVTQFSRQRVALLIISVAVFILVFAAVADLQLWSSRAFRDRQFRRYLDQIEDLEATDTKDTKLNYGVVVDCGSSGSRVFVYFWPPHNGNPHDLLDIKQMRDRGSKPVVKKIKPGISTMALTPEKSSDYINPLLSFAASYIPKHKHKETPLYILCTAGMRILPESQQIAILQDLVKDVPQEFDFLFSEAHAEVISGKQEGVYAWISINFVLGRFDHVVDEEDAVVAVTIGTQEESIIRKRTVGVIDMGGGSLQIAYEVPTTMTYPSVEHEEVAKSMLAEFNLGCDLQHTEHVYRVYVTTFMGFGGNFARQRYEDMVFNDTITKNRIQGQQIGVHPNSPLQDPCLPVGLIDQVRRQSHDLHVLGKGNWDSCRQQLEPLLLKSNDTQAYLNSVYQPSIDFSNSEFYGFSEFFYCTEDVLRMGGIYNSQKFAKAAKEYCSMPWTTLQDRFNSGLYSSHADQHRLKYQCFKSAWMFSILHNGFHFPHEYPNFKTAQLVYDKEVQWTLGAILYKTRFLPLRDIRQESSRPAHVSWFRISFVYNHYLFFACILVVLLSIVLYILRLRRIHRRQARASALDLLLMEEGVHTVLEPGIPT</sequence>
<accession>Q28CF8</accession>
<accession>Q2QDC5</accession>
<gene>
    <name type="primary">entpd7</name>
    <name type="ORF">TGas060f02.1</name>
</gene>
<name>ENTP7_XENTR</name>